<proteinExistence type="inferred from homology"/>
<evidence type="ECO:0000255" key="1">
    <source>
        <dbReference type="HAMAP-Rule" id="MF_00031"/>
    </source>
</evidence>
<gene>
    <name evidence="1" type="primary">ruvA</name>
    <name type="ordered locus">Acid_0956</name>
</gene>
<dbReference type="EMBL" id="CP000473">
    <property type="protein sequence ID" value="ABJ81955.1"/>
    <property type="molecule type" value="Genomic_DNA"/>
</dbReference>
<dbReference type="SMR" id="Q02AG7"/>
<dbReference type="FunCoup" id="Q02AG7">
    <property type="interactions" value="295"/>
</dbReference>
<dbReference type="STRING" id="234267.Acid_0956"/>
<dbReference type="KEGG" id="sus:Acid_0956"/>
<dbReference type="eggNOG" id="COG0632">
    <property type="taxonomic scope" value="Bacteria"/>
</dbReference>
<dbReference type="HOGENOM" id="CLU_087936_0_0_0"/>
<dbReference type="InParanoid" id="Q02AG7"/>
<dbReference type="OrthoDB" id="5293449at2"/>
<dbReference type="GO" id="GO:0005737">
    <property type="term" value="C:cytoplasm"/>
    <property type="evidence" value="ECO:0007669"/>
    <property type="project" value="UniProtKB-SubCell"/>
</dbReference>
<dbReference type="GO" id="GO:0009379">
    <property type="term" value="C:Holliday junction helicase complex"/>
    <property type="evidence" value="ECO:0007669"/>
    <property type="project" value="InterPro"/>
</dbReference>
<dbReference type="GO" id="GO:0048476">
    <property type="term" value="C:Holliday junction resolvase complex"/>
    <property type="evidence" value="ECO:0007669"/>
    <property type="project" value="UniProtKB-UniRule"/>
</dbReference>
<dbReference type="GO" id="GO:0005524">
    <property type="term" value="F:ATP binding"/>
    <property type="evidence" value="ECO:0007669"/>
    <property type="project" value="InterPro"/>
</dbReference>
<dbReference type="GO" id="GO:0000400">
    <property type="term" value="F:four-way junction DNA binding"/>
    <property type="evidence" value="ECO:0007669"/>
    <property type="project" value="UniProtKB-UniRule"/>
</dbReference>
<dbReference type="GO" id="GO:0009378">
    <property type="term" value="F:four-way junction helicase activity"/>
    <property type="evidence" value="ECO:0007669"/>
    <property type="project" value="InterPro"/>
</dbReference>
<dbReference type="GO" id="GO:0006310">
    <property type="term" value="P:DNA recombination"/>
    <property type="evidence" value="ECO:0007669"/>
    <property type="project" value="UniProtKB-UniRule"/>
</dbReference>
<dbReference type="GO" id="GO:0006281">
    <property type="term" value="P:DNA repair"/>
    <property type="evidence" value="ECO:0007669"/>
    <property type="project" value="UniProtKB-UniRule"/>
</dbReference>
<dbReference type="CDD" id="cd14332">
    <property type="entry name" value="UBA_RuvA_C"/>
    <property type="match status" value="1"/>
</dbReference>
<dbReference type="Gene3D" id="1.10.150.20">
    <property type="entry name" value="5' to 3' exonuclease, C-terminal subdomain"/>
    <property type="match status" value="1"/>
</dbReference>
<dbReference type="Gene3D" id="1.10.8.10">
    <property type="entry name" value="DNA helicase RuvA subunit, C-terminal domain"/>
    <property type="match status" value="1"/>
</dbReference>
<dbReference type="Gene3D" id="2.40.50.140">
    <property type="entry name" value="Nucleic acid-binding proteins"/>
    <property type="match status" value="1"/>
</dbReference>
<dbReference type="HAMAP" id="MF_00031">
    <property type="entry name" value="DNA_HJ_migration_RuvA"/>
    <property type="match status" value="1"/>
</dbReference>
<dbReference type="InterPro" id="IPR013849">
    <property type="entry name" value="DNA_helicase_Holl-junc_RuvA_I"/>
</dbReference>
<dbReference type="InterPro" id="IPR003583">
    <property type="entry name" value="Hlx-hairpin-Hlx_DNA-bd_motif"/>
</dbReference>
<dbReference type="InterPro" id="IPR012340">
    <property type="entry name" value="NA-bd_OB-fold"/>
</dbReference>
<dbReference type="InterPro" id="IPR000085">
    <property type="entry name" value="RuvA"/>
</dbReference>
<dbReference type="InterPro" id="IPR010994">
    <property type="entry name" value="RuvA_2-like"/>
</dbReference>
<dbReference type="InterPro" id="IPR011114">
    <property type="entry name" value="RuvA_C"/>
</dbReference>
<dbReference type="InterPro" id="IPR036267">
    <property type="entry name" value="RuvA_C_sf"/>
</dbReference>
<dbReference type="NCBIfam" id="TIGR00084">
    <property type="entry name" value="ruvA"/>
    <property type="match status" value="1"/>
</dbReference>
<dbReference type="Pfam" id="PF14520">
    <property type="entry name" value="HHH_5"/>
    <property type="match status" value="1"/>
</dbReference>
<dbReference type="Pfam" id="PF01330">
    <property type="entry name" value="RuvA_N"/>
    <property type="match status" value="1"/>
</dbReference>
<dbReference type="SMART" id="SM00278">
    <property type="entry name" value="HhH1"/>
    <property type="match status" value="3"/>
</dbReference>
<dbReference type="SUPFAM" id="SSF46929">
    <property type="entry name" value="DNA helicase RuvA subunit, C-terminal domain"/>
    <property type="match status" value="1"/>
</dbReference>
<dbReference type="SUPFAM" id="SSF50249">
    <property type="entry name" value="Nucleic acid-binding proteins"/>
    <property type="match status" value="1"/>
</dbReference>
<dbReference type="SUPFAM" id="SSF47781">
    <property type="entry name" value="RuvA domain 2-like"/>
    <property type="match status" value="1"/>
</dbReference>
<feature type="chain" id="PRO_1000002559" description="Holliday junction branch migration complex subunit RuvA">
    <location>
        <begin position="1"/>
        <end position="197"/>
    </location>
</feature>
<feature type="region of interest" description="Domain I" evidence="1">
    <location>
        <begin position="1"/>
        <end position="64"/>
    </location>
</feature>
<feature type="region of interest" description="Domain II" evidence="1">
    <location>
        <begin position="65"/>
        <end position="143"/>
    </location>
</feature>
<feature type="region of interest" description="Flexible linker" evidence="1">
    <location>
        <begin position="144"/>
        <end position="153"/>
    </location>
</feature>
<feature type="region of interest" description="Domain III" evidence="1">
    <location>
        <begin position="153"/>
        <end position="197"/>
    </location>
</feature>
<sequence length="197" mass="21041">MIALLRGLVVEKHPNQVLVETGGVGYDVTIPVSTFTKLPDLGGEVRLRIYTHVREDVLALYGFLTQDEKALFEKLISVSGIGPTLAVKILSGLAAADLILSIRRGEVEKLVKVPGVGKKTAERMVLELRDKLPAATGEEPGAPAAEALSPIDQDVLSALLNLGCARPQAEAAVRKAKAAGASLDFEPLFRRALELVR</sequence>
<comment type="function">
    <text evidence="1">The RuvA-RuvB-RuvC complex processes Holliday junction (HJ) DNA during genetic recombination and DNA repair, while the RuvA-RuvB complex plays an important role in the rescue of blocked DNA replication forks via replication fork reversal (RFR). RuvA specifically binds to HJ cruciform DNA, conferring on it an open structure. The RuvB hexamer acts as an ATP-dependent pump, pulling dsDNA into and through the RuvAB complex. HJ branch migration allows RuvC to scan DNA until it finds its consensus sequence, where it cleaves and resolves the cruciform DNA.</text>
</comment>
<comment type="subunit">
    <text evidence="1">Homotetramer. Forms an RuvA(8)-RuvB(12)-Holliday junction (HJ) complex. HJ DNA is sandwiched between 2 RuvA tetramers; dsDNA enters through RuvA and exits via RuvB. An RuvB hexamer assembles on each DNA strand where it exits the tetramer. Each RuvB hexamer is contacted by two RuvA subunits (via domain III) on 2 adjacent RuvB subunits; this complex drives branch migration. In the full resolvosome a probable DNA-RuvA(4)-RuvB(12)-RuvC(2) complex forms which resolves the HJ.</text>
</comment>
<comment type="subcellular location">
    <subcellularLocation>
        <location evidence="1">Cytoplasm</location>
    </subcellularLocation>
</comment>
<comment type="domain">
    <text evidence="1">Has three domains with a flexible linker between the domains II and III and assumes an 'L' shape. Domain III is highly mobile and contacts RuvB.</text>
</comment>
<comment type="similarity">
    <text evidence="1">Belongs to the RuvA family.</text>
</comment>
<organism>
    <name type="scientific">Solibacter usitatus (strain Ellin6076)</name>
    <dbReference type="NCBI Taxonomy" id="234267"/>
    <lineage>
        <taxon>Bacteria</taxon>
        <taxon>Pseudomonadati</taxon>
        <taxon>Acidobacteriota</taxon>
        <taxon>Terriglobia</taxon>
        <taxon>Bryobacterales</taxon>
        <taxon>Solibacteraceae</taxon>
        <taxon>Candidatus Solibacter</taxon>
    </lineage>
</organism>
<accession>Q02AG7</accession>
<protein>
    <recommendedName>
        <fullName evidence="1">Holliday junction branch migration complex subunit RuvA</fullName>
    </recommendedName>
</protein>
<reference key="1">
    <citation type="journal article" date="2009" name="Appl. Environ. Microbiol.">
        <title>Three genomes from the phylum Acidobacteria provide insight into the lifestyles of these microorganisms in soils.</title>
        <authorList>
            <person name="Ward N.L."/>
            <person name="Challacombe J.F."/>
            <person name="Janssen P.H."/>
            <person name="Henrissat B."/>
            <person name="Coutinho P.M."/>
            <person name="Wu M."/>
            <person name="Xie G."/>
            <person name="Haft D.H."/>
            <person name="Sait M."/>
            <person name="Badger J."/>
            <person name="Barabote R.D."/>
            <person name="Bradley B."/>
            <person name="Brettin T.S."/>
            <person name="Brinkac L.M."/>
            <person name="Bruce D."/>
            <person name="Creasy T."/>
            <person name="Daugherty S.C."/>
            <person name="Davidsen T.M."/>
            <person name="DeBoy R.T."/>
            <person name="Detter J.C."/>
            <person name="Dodson R.J."/>
            <person name="Durkin A.S."/>
            <person name="Ganapathy A."/>
            <person name="Gwinn-Giglio M."/>
            <person name="Han C.S."/>
            <person name="Khouri H."/>
            <person name="Kiss H."/>
            <person name="Kothari S.P."/>
            <person name="Madupu R."/>
            <person name="Nelson K.E."/>
            <person name="Nelson W.C."/>
            <person name="Paulsen I."/>
            <person name="Penn K."/>
            <person name="Ren Q."/>
            <person name="Rosovitz M.J."/>
            <person name="Selengut J.D."/>
            <person name="Shrivastava S."/>
            <person name="Sullivan S.A."/>
            <person name="Tapia R."/>
            <person name="Thompson L.S."/>
            <person name="Watkins K.L."/>
            <person name="Yang Q."/>
            <person name="Yu C."/>
            <person name="Zafar N."/>
            <person name="Zhou L."/>
            <person name="Kuske C.R."/>
        </authorList>
    </citation>
    <scope>NUCLEOTIDE SEQUENCE [LARGE SCALE GENOMIC DNA]</scope>
    <source>
        <strain>Ellin6076</strain>
    </source>
</reference>
<keyword id="KW-0963">Cytoplasm</keyword>
<keyword id="KW-0227">DNA damage</keyword>
<keyword id="KW-0233">DNA recombination</keyword>
<keyword id="KW-0234">DNA repair</keyword>
<keyword id="KW-0238">DNA-binding</keyword>
<name>RUVA_SOLUE</name>